<reference key="1">
    <citation type="submission" date="2006-11" db="EMBL/GenBank/DDBJ databases">
        <title>Sequence of Campylobacter fetus subsp. fetus 82-40.</title>
        <authorList>
            <person name="Fouts D.E."/>
            <person name="Nelson K.E."/>
        </authorList>
    </citation>
    <scope>NUCLEOTIDE SEQUENCE [LARGE SCALE GENOMIC DNA]</scope>
    <source>
        <strain>82-40</strain>
    </source>
</reference>
<name>OBG_CAMFF</name>
<accession>A0RR37</accession>
<keyword id="KW-0963">Cytoplasm</keyword>
<keyword id="KW-0342">GTP-binding</keyword>
<keyword id="KW-0378">Hydrolase</keyword>
<keyword id="KW-0460">Magnesium</keyword>
<keyword id="KW-0479">Metal-binding</keyword>
<keyword id="KW-0547">Nucleotide-binding</keyword>
<proteinExistence type="inferred from homology"/>
<sequence>MFVDSASFSVSSGKGGPGCASFRREKHVPLGGPDGGDGGNGGDVYFIVDNNTHTLANYKGKRAMKAANGVPGLPRNMTGKKGDNLELIVPPGTAVYDADSNELLLDLISEGQKELFLSGGKGGLGNVHFKTSVNQAPTKAQPGLPGETRNIRLELKLIADVGLVGFPNVGKSTLISSISNAKPQIANYEFTTLTPKLGLVEVDEFSGFIMADIPGIIEGASDGKGLGIQFLKHIERTKVLLYMIDLANYRSLKEQFETLKSEVLKFSPNLAKRDFAIALTRLDAAVDADEKIEEFLNEFKFDKKQDIYEYDRQKPFFVLPISSVAGDGLKELKFGLLEILKGEN</sequence>
<comment type="function">
    <text evidence="1">An essential GTPase which binds GTP, GDP and possibly (p)ppGpp with moderate affinity, with high nucleotide exchange rates and a fairly low GTP hydrolysis rate. Plays a role in control of the cell cycle, stress response, ribosome biogenesis and in those bacteria that undergo differentiation, in morphogenesis control.</text>
</comment>
<comment type="cofactor">
    <cofactor evidence="1">
        <name>Mg(2+)</name>
        <dbReference type="ChEBI" id="CHEBI:18420"/>
    </cofactor>
</comment>
<comment type="subunit">
    <text evidence="1">Monomer.</text>
</comment>
<comment type="subcellular location">
    <subcellularLocation>
        <location evidence="1">Cytoplasm</location>
    </subcellularLocation>
</comment>
<comment type="similarity">
    <text evidence="1">Belongs to the TRAFAC class OBG-HflX-like GTPase superfamily. OBG GTPase family.</text>
</comment>
<organism>
    <name type="scientific">Campylobacter fetus subsp. fetus (strain 82-40)</name>
    <dbReference type="NCBI Taxonomy" id="360106"/>
    <lineage>
        <taxon>Bacteria</taxon>
        <taxon>Pseudomonadati</taxon>
        <taxon>Campylobacterota</taxon>
        <taxon>Epsilonproteobacteria</taxon>
        <taxon>Campylobacterales</taxon>
        <taxon>Campylobacteraceae</taxon>
        <taxon>Campylobacter</taxon>
    </lineage>
</organism>
<evidence type="ECO:0000255" key="1">
    <source>
        <dbReference type="HAMAP-Rule" id="MF_01454"/>
    </source>
</evidence>
<evidence type="ECO:0000255" key="2">
    <source>
        <dbReference type="PROSITE-ProRule" id="PRU01231"/>
    </source>
</evidence>
<evidence type="ECO:0000256" key="3">
    <source>
        <dbReference type="SAM" id="MobiDB-lite"/>
    </source>
</evidence>
<protein>
    <recommendedName>
        <fullName evidence="1">GTPase Obg</fullName>
        <ecNumber evidence="1">3.6.5.-</ecNumber>
    </recommendedName>
    <alternativeName>
        <fullName evidence="1">GTP-binding protein Obg</fullName>
    </alternativeName>
</protein>
<dbReference type="EC" id="3.6.5.-" evidence="1"/>
<dbReference type="EMBL" id="CP000487">
    <property type="protein sequence ID" value="ABK81834.1"/>
    <property type="molecule type" value="Genomic_DNA"/>
</dbReference>
<dbReference type="SMR" id="A0RR37"/>
<dbReference type="KEGG" id="cff:CFF8240_1536"/>
<dbReference type="eggNOG" id="COG0536">
    <property type="taxonomic scope" value="Bacteria"/>
</dbReference>
<dbReference type="HOGENOM" id="CLU_011747_2_0_7"/>
<dbReference type="Proteomes" id="UP000000760">
    <property type="component" value="Chromosome"/>
</dbReference>
<dbReference type="GO" id="GO:0005737">
    <property type="term" value="C:cytoplasm"/>
    <property type="evidence" value="ECO:0007669"/>
    <property type="project" value="UniProtKB-SubCell"/>
</dbReference>
<dbReference type="GO" id="GO:0005525">
    <property type="term" value="F:GTP binding"/>
    <property type="evidence" value="ECO:0007669"/>
    <property type="project" value="UniProtKB-UniRule"/>
</dbReference>
<dbReference type="GO" id="GO:0003924">
    <property type="term" value="F:GTPase activity"/>
    <property type="evidence" value="ECO:0007669"/>
    <property type="project" value="UniProtKB-UniRule"/>
</dbReference>
<dbReference type="GO" id="GO:0000287">
    <property type="term" value="F:magnesium ion binding"/>
    <property type="evidence" value="ECO:0007669"/>
    <property type="project" value="InterPro"/>
</dbReference>
<dbReference type="GO" id="GO:0042254">
    <property type="term" value="P:ribosome biogenesis"/>
    <property type="evidence" value="ECO:0007669"/>
    <property type="project" value="UniProtKB-UniRule"/>
</dbReference>
<dbReference type="CDD" id="cd01898">
    <property type="entry name" value="Obg"/>
    <property type="match status" value="1"/>
</dbReference>
<dbReference type="FunFam" id="2.70.210.12:FF:000001">
    <property type="entry name" value="GTPase Obg"/>
    <property type="match status" value="1"/>
</dbReference>
<dbReference type="Gene3D" id="2.70.210.12">
    <property type="entry name" value="GTP1/OBG domain"/>
    <property type="match status" value="1"/>
</dbReference>
<dbReference type="Gene3D" id="3.40.50.300">
    <property type="entry name" value="P-loop containing nucleotide triphosphate hydrolases"/>
    <property type="match status" value="1"/>
</dbReference>
<dbReference type="HAMAP" id="MF_01454">
    <property type="entry name" value="GTPase_Obg"/>
    <property type="match status" value="1"/>
</dbReference>
<dbReference type="InterPro" id="IPR031167">
    <property type="entry name" value="G_OBG"/>
</dbReference>
<dbReference type="InterPro" id="IPR006073">
    <property type="entry name" value="GTP-bd"/>
</dbReference>
<dbReference type="InterPro" id="IPR014100">
    <property type="entry name" value="GTP-bd_Obg/CgtA"/>
</dbReference>
<dbReference type="InterPro" id="IPR006074">
    <property type="entry name" value="GTP1-OBG_CS"/>
</dbReference>
<dbReference type="InterPro" id="IPR006169">
    <property type="entry name" value="GTP1_OBG_dom"/>
</dbReference>
<dbReference type="InterPro" id="IPR036726">
    <property type="entry name" value="GTP1_OBG_dom_sf"/>
</dbReference>
<dbReference type="InterPro" id="IPR045086">
    <property type="entry name" value="OBG_GTPase"/>
</dbReference>
<dbReference type="InterPro" id="IPR027417">
    <property type="entry name" value="P-loop_NTPase"/>
</dbReference>
<dbReference type="NCBIfam" id="TIGR02729">
    <property type="entry name" value="Obg_CgtA"/>
    <property type="match status" value="1"/>
</dbReference>
<dbReference type="NCBIfam" id="NF008955">
    <property type="entry name" value="PRK12297.1"/>
    <property type="match status" value="1"/>
</dbReference>
<dbReference type="NCBIfam" id="NF008956">
    <property type="entry name" value="PRK12299.1"/>
    <property type="match status" value="1"/>
</dbReference>
<dbReference type="PANTHER" id="PTHR11702">
    <property type="entry name" value="DEVELOPMENTALLY REGULATED GTP-BINDING PROTEIN-RELATED"/>
    <property type="match status" value="1"/>
</dbReference>
<dbReference type="PANTHER" id="PTHR11702:SF31">
    <property type="entry name" value="MITOCHONDRIAL RIBOSOME-ASSOCIATED GTPASE 2"/>
    <property type="match status" value="1"/>
</dbReference>
<dbReference type="Pfam" id="PF01018">
    <property type="entry name" value="GTP1_OBG"/>
    <property type="match status" value="1"/>
</dbReference>
<dbReference type="Pfam" id="PF01926">
    <property type="entry name" value="MMR_HSR1"/>
    <property type="match status" value="1"/>
</dbReference>
<dbReference type="PIRSF" id="PIRSF002401">
    <property type="entry name" value="GTP_bd_Obg/CgtA"/>
    <property type="match status" value="1"/>
</dbReference>
<dbReference type="PRINTS" id="PR00326">
    <property type="entry name" value="GTP1OBG"/>
</dbReference>
<dbReference type="SUPFAM" id="SSF82051">
    <property type="entry name" value="Obg GTP-binding protein N-terminal domain"/>
    <property type="match status" value="1"/>
</dbReference>
<dbReference type="SUPFAM" id="SSF52540">
    <property type="entry name" value="P-loop containing nucleoside triphosphate hydrolases"/>
    <property type="match status" value="1"/>
</dbReference>
<dbReference type="PROSITE" id="PS51710">
    <property type="entry name" value="G_OBG"/>
    <property type="match status" value="1"/>
</dbReference>
<dbReference type="PROSITE" id="PS00905">
    <property type="entry name" value="GTP1_OBG"/>
    <property type="match status" value="1"/>
</dbReference>
<dbReference type="PROSITE" id="PS51883">
    <property type="entry name" value="OBG"/>
    <property type="match status" value="1"/>
</dbReference>
<gene>
    <name evidence="1" type="primary">obg</name>
    <name type="ordered locus">CFF8240_1536</name>
</gene>
<feature type="chain" id="PRO_0000385800" description="GTPase Obg">
    <location>
        <begin position="1"/>
        <end position="344"/>
    </location>
</feature>
<feature type="domain" description="Obg" evidence="2">
    <location>
        <begin position="1"/>
        <end position="158"/>
    </location>
</feature>
<feature type="domain" description="OBG-type G" evidence="1">
    <location>
        <begin position="159"/>
        <end position="341"/>
    </location>
</feature>
<feature type="region of interest" description="Disordered" evidence="3">
    <location>
        <begin position="1"/>
        <end position="36"/>
    </location>
</feature>
<feature type="compositionally biased region" description="Polar residues" evidence="3">
    <location>
        <begin position="1"/>
        <end position="12"/>
    </location>
</feature>
<feature type="binding site" evidence="1">
    <location>
        <begin position="165"/>
        <end position="172"/>
    </location>
    <ligand>
        <name>GTP</name>
        <dbReference type="ChEBI" id="CHEBI:37565"/>
    </ligand>
</feature>
<feature type="binding site" evidence="1">
    <location>
        <position position="172"/>
    </location>
    <ligand>
        <name>Mg(2+)</name>
        <dbReference type="ChEBI" id="CHEBI:18420"/>
    </ligand>
</feature>
<feature type="binding site" evidence="1">
    <location>
        <begin position="190"/>
        <end position="194"/>
    </location>
    <ligand>
        <name>GTP</name>
        <dbReference type="ChEBI" id="CHEBI:37565"/>
    </ligand>
</feature>
<feature type="binding site" evidence="1">
    <location>
        <position position="192"/>
    </location>
    <ligand>
        <name>Mg(2+)</name>
        <dbReference type="ChEBI" id="CHEBI:18420"/>
    </ligand>
</feature>
<feature type="binding site" evidence="1">
    <location>
        <begin position="212"/>
        <end position="215"/>
    </location>
    <ligand>
        <name>GTP</name>
        <dbReference type="ChEBI" id="CHEBI:37565"/>
    </ligand>
</feature>
<feature type="binding site" evidence="1">
    <location>
        <begin position="280"/>
        <end position="283"/>
    </location>
    <ligand>
        <name>GTP</name>
        <dbReference type="ChEBI" id="CHEBI:37565"/>
    </ligand>
</feature>
<feature type="binding site" evidence="1">
    <location>
        <begin position="322"/>
        <end position="324"/>
    </location>
    <ligand>
        <name>GTP</name>
        <dbReference type="ChEBI" id="CHEBI:37565"/>
    </ligand>
</feature>